<name>CHPB_ECOLI</name>
<reference key="1">
    <citation type="journal article" date="1993" name="J. Bacteriol.">
        <title>chpA and chpB, Escherichia coli chromosomal homologs of the pem locus responsible for stable maintenance of plasmid R100.</title>
        <authorList>
            <person name="Masuda Y."/>
            <person name="Miyakawa K."/>
            <person name="Nishimura Y."/>
            <person name="Ohtsubo E."/>
        </authorList>
    </citation>
    <scope>NUCLEOTIDE SEQUENCE [GENOMIC DNA]</scope>
    <scope>FUNCTION</scope>
    <scope>PROBABLE OPERON STRUCTURE</scope>
    <source>
        <strain>K12 / MC1000 / ATCC 39531</strain>
    </source>
</reference>
<reference key="2">
    <citation type="journal article" date="1995" name="Nucleic Acids Res.">
        <title>Analysis of the Escherichia coli genome VI: DNA sequence of the region from 92.8 through 100 minutes.</title>
        <authorList>
            <person name="Burland V.D."/>
            <person name="Plunkett G. III"/>
            <person name="Sofia H.J."/>
            <person name="Daniels D.L."/>
            <person name="Blattner F.R."/>
        </authorList>
    </citation>
    <scope>NUCLEOTIDE SEQUENCE [LARGE SCALE GENOMIC DNA]</scope>
    <source>
        <strain>K12 / MG1655 / ATCC 47076</strain>
    </source>
</reference>
<reference key="3">
    <citation type="journal article" date="1997" name="Science">
        <title>The complete genome sequence of Escherichia coli K-12.</title>
        <authorList>
            <person name="Blattner F.R."/>
            <person name="Plunkett G. III"/>
            <person name="Bloch C.A."/>
            <person name="Perna N.T."/>
            <person name="Burland V."/>
            <person name="Riley M."/>
            <person name="Collado-Vides J."/>
            <person name="Glasner J.D."/>
            <person name="Rode C.K."/>
            <person name="Mayhew G.F."/>
            <person name="Gregor J."/>
            <person name="Davis N.W."/>
            <person name="Kirkpatrick H.A."/>
            <person name="Goeden M.A."/>
            <person name="Rose D.J."/>
            <person name="Mau B."/>
            <person name="Shao Y."/>
        </authorList>
    </citation>
    <scope>NUCLEOTIDE SEQUENCE [LARGE SCALE GENOMIC DNA]</scope>
    <source>
        <strain>K12 / MG1655 / ATCC 47076</strain>
    </source>
</reference>
<reference key="4">
    <citation type="journal article" date="2006" name="Mol. Syst. Biol.">
        <title>Highly accurate genome sequences of Escherichia coli K-12 strains MG1655 and W3110.</title>
        <authorList>
            <person name="Hayashi K."/>
            <person name="Morooka N."/>
            <person name="Yamamoto Y."/>
            <person name="Fujita K."/>
            <person name="Isono K."/>
            <person name="Choi S."/>
            <person name="Ohtsubo E."/>
            <person name="Baba T."/>
            <person name="Wanner B.L."/>
            <person name="Mori H."/>
            <person name="Horiuchi T."/>
        </authorList>
    </citation>
    <scope>NUCLEOTIDE SEQUENCE [LARGE SCALE GENOMIC DNA]</scope>
    <source>
        <strain>K12 / W3110 / ATCC 27325 / DSM 5911</strain>
    </source>
</reference>
<reference key="5">
    <citation type="journal article" date="1986" name="J. Biol. Chem.">
        <title>Structural analysis of the ileR locus of Escherichia coli K12.</title>
        <authorList>
            <person name="Weiss D.L."/>
            <person name="Johnson D.I."/>
            <person name="Weith H.L."/>
            <person name="Somerville R.L."/>
        </authorList>
    </citation>
    <scope>NUCLEOTIDE SEQUENCE [GENOMIC DNA] OF 1-30</scope>
    <source>
        <strain>K12</strain>
    </source>
</reference>
<reference key="6">
    <citation type="journal article" date="1988" name="J. Bacteriol.">
        <title>Cloning and characterization of the gene encoding inorganic pyrophosphatase of Escherichia coli K-12.</title>
        <authorList>
            <person name="Lahti R."/>
            <person name="Pitkaeranta T."/>
            <person name="Valve E."/>
            <person name="Ilta I."/>
            <person name="Kukko-Kalske E."/>
            <person name="Heinonen J."/>
        </authorList>
    </citation>
    <scope>NUCLEOTIDE SEQUENCE [GENOMIC DNA] OF 20-116</scope>
    <source>
        <strain>K12</strain>
    </source>
</reference>
<reference key="7">
    <citation type="journal article" date="1994" name="J. Bacteriol.">
        <title>Mapping and disruption of the chpB locus in Escherichia coli.</title>
        <authorList>
            <person name="Masuda Y."/>
            <person name="Ohtsubo E."/>
        </authorList>
    </citation>
    <scope>GENE MAPPING</scope>
    <scope>DISRUPTION PHENOTYPE</scope>
    <source>
        <strain>K12 / W3110 / ATCC 27325 / DSM 5911</strain>
    </source>
</reference>
<reference key="8">
    <citation type="journal article" date="2003" name="J. Mol. Biol.">
        <title>Toxin-antitoxin loci as stress-response-elements: ChpAK/MazF and ChpBK cleave translated RNAs and are counteracted by tmRNA.</title>
        <authorList>
            <person name="Christensen S.K."/>
            <person name="Pedersen K."/>
            <person name="Hansen F.G."/>
            <person name="Gerdes K."/>
        </authorList>
    </citation>
    <scope>FUNCTION</scope>
    <scope>RNA CLEAVAGE</scope>
    <scope>DISRUPTION PHENOTYPE</scope>
    <source>
        <strain>K12 / MG1655 / ATCC 47076</strain>
    </source>
</reference>
<reference key="9">
    <citation type="journal article" date="2006" name="J. Mol. Biol.">
        <title>Model for RNA binding and the catalytic site of the RNase Kid of the bacterial parD toxin-antitoxin system.</title>
        <authorList>
            <person name="Kamphuis M.B."/>
            <person name="Bonvin A.M."/>
            <person name="Monti M.C."/>
            <person name="Lemonnier M."/>
            <person name="Munoz-Gomez A."/>
            <person name="van den Heuvel R.H."/>
            <person name="Diaz-Orejas R."/>
            <person name="Boelens R."/>
        </authorList>
    </citation>
    <scope>FUNCTION AS AN RNA ENDORIBONUCLEASE</scope>
    <scope>SUBUNIT</scope>
    <scope>INTERACTION WITH CHPS</scope>
</reference>
<reference key="10">
    <citation type="journal article" date="2011" name="Mol. Cell">
        <title>The Escherichia coli extracellular death factor EDF induces the endoribonucleolytic activities of the toxins MazF and ChpBK.</title>
        <authorList>
            <person name="Belitsky M."/>
            <person name="Avshalom H."/>
            <person name="Erental A."/>
            <person name="Yelin I."/>
            <person name="Kumar S."/>
            <person name="London N."/>
            <person name="Sperber M."/>
            <person name="Schueler-Furman O."/>
            <person name="Engelberg-Kulka H."/>
        </authorList>
    </citation>
    <scope>FUNCTION</scope>
    <scope>ACTIVITY REGULATION</scope>
</reference>
<reference key="11">
    <citation type="journal article" date="2011" name="Proc. Natl. Acad. Sci. U.S.A.">
        <title>Bacterial persistence by RNA endonucleases.</title>
        <authorList>
            <person name="Maisonneuve E."/>
            <person name="Shakespeare L.J."/>
            <person name="Joergensen M.G."/>
            <person name="Gerdes K."/>
        </authorList>
    </citation>
    <scope>RETRACTED PAPER</scope>
    <source>
        <strain>K12 / MG1655 / ATCC 47076</strain>
    </source>
</reference>
<reference key="12">
    <citation type="journal article" date="2018" name="Proc. Natl. Acad. Sci. U.S.A.">
        <authorList>
            <person name="Maisonneuve E."/>
            <person name="Shakespeare L.J."/>
            <person name="Joergensen M.G."/>
            <person name="Gerdes K."/>
        </authorList>
    </citation>
    <scope>RETRACTION NOTICE OF PUBMED:21788497</scope>
</reference>
<evidence type="ECO:0000269" key="1">
    <source>
    </source>
</evidence>
<evidence type="ECO:0000269" key="2">
    <source>
    </source>
</evidence>
<evidence type="ECO:0000269" key="3">
    <source>
    </source>
</evidence>
<evidence type="ECO:0000269" key="4">
    <source>
    </source>
</evidence>
<evidence type="ECO:0000269" key="5">
    <source>
    </source>
</evidence>
<evidence type="ECO:0000305" key="6"/>
<organism>
    <name type="scientific">Escherichia coli (strain K12)</name>
    <dbReference type="NCBI Taxonomy" id="83333"/>
    <lineage>
        <taxon>Bacteria</taxon>
        <taxon>Pseudomonadati</taxon>
        <taxon>Pseudomonadota</taxon>
        <taxon>Gammaproteobacteria</taxon>
        <taxon>Enterobacterales</taxon>
        <taxon>Enterobacteriaceae</taxon>
        <taxon>Escherichia</taxon>
    </lineage>
</organism>
<accession>P33647</accession>
<accession>Q2M680</accession>
<sequence length="116" mass="12492">MVKKSEFERGDIVLVGFDPASGHEQQGAGRPALVLSVQAFNQLGMTLVAPITQGGNFARYAGFSVPLHCEEGDVHGVVLVNQVRMMDLHARLAKRIGLAADEVVEEALLRLQAVVE</sequence>
<proteinExistence type="evidence at protein level"/>
<dbReference type="EC" id="3.1.-.-"/>
<dbReference type="EMBL" id="D16451">
    <property type="protein sequence ID" value="BAA03920.1"/>
    <property type="molecule type" value="Genomic_DNA"/>
</dbReference>
<dbReference type="EMBL" id="M14018">
    <property type="status" value="NOT_ANNOTATED_CDS"/>
    <property type="molecule type" value="Genomic_DNA"/>
</dbReference>
<dbReference type="EMBL" id="U14003">
    <property type="protein sequence ID" value="AAA97122.1"/>
    <property type="molecule type" value="Genomic_DNA"/>
</dbReference>
<dbReference type="EMBL" id="U00096">
    <property type="protein sequence ID" value="AAC77182.1"/>
    <property type="molecule type" value="Genomic_DNA"/>
</dbReference>
<dbReference type="EMBL" id="M23550">
    <property type="status" value="NOT_ANNOTATED_CDS"/>
    <property type="molecule type" value="Unassigned_DNA"/>
</dbReference>
<dbReference type="EMBL" id="AP009048">
    <property type="protein sequence ID" value="BAE78226.1"/>
    <property type="molecule type" value="Genomic_DNA"/>
</dbReference>
<dbReference type="PIR" id="D49339">
    <property type="entry name" value="D49339"/>
</dbReference>
<dbReference type="RefSeq" id="NP_418646.1">
    <property type="nucleotide sequence ID" value="NC_000913.3"/>
</dbReference>
<dbReference type="RefSeq" id="WP_000239577.1">
    <property type="nucleotide sequence ID" value="NZ_LN832404.1"/>
</dbReference>
<dbReference type="SMR" id="P33647"/>
<dbReference type="BioGRID" id="4259311">
    <property type="interactions" value="4"/>
</dbReference>
<dbReference type="ComplexPortal" id="CPX-4063">
    <property type="entry name" value="ChpBS toxin-antitoxin complex"/>
</dbReference>
<dbReference type="FunCoup" id="P33647">
    <property type="interactions" value="121"/>
</dbReference>
<dbReference type="STRING" id="511145.b4225"/>
<dbReference type="jPOST" id="P33647"/>
<dbReference type="PaxDb" id="511145-b4225"/>
<dbReference type="EnsemblBacteria" id="AAC77182">
    <property type="protein sequence ID" value="AAC77182"/>
    <property type="gene ID" value="b4225"/>
</dbReference>
<dbReference type="GeneID" id="948747"/>
<dbReference type="KEGG" id="ecj:JW4184"/>
<dbReference type="KEGG" id="eco:b4225"/>
<dbReference type="KEGG" id="ecoc:C3026_22815"/>
<dbReference type="PATRIC" id="fig|511145.12.peg.4357"/>
<dbReference type="EchoBASE" id="EB2020"/>
<dbReference type="eggNOG" id="COG2337">
    <property type="taxonomic scope" value="Bacteria"/>
</dbReference>
<dbReference type="HOGENOM" id="CLU_121823_2_1_6"/>
<dbReference type="InParanoid" id="P33647"/>
<dbReference type="OMA" id="IWHVNGD"/>
<dbReference type="OrthoDB" id="9808744at2"/>
<dbReference type="PhylomeDB" id="P33647"/>
<dbReference type="BioCyc" id="EcoCyc:EG12096-MONOMER"/>
<dbReference type="BioCyc" id="MetaCyc:EG12096-MONOMER"/>
<dbReference type="PRO" id="PR:P33647"/>
<dbReference type="Proteomes" id="UP000000625">
    <property type="component" value="Chromosome"/>
</dbReference>
<dbReference type="GO" id="GO:0110001">
    <property type="term" value="C:toxin-antitoxin complex"/>
    <property type="evidence" value="ECO:0000353"/>
    <property type="project" value="ComplexPortal"/>
</dbReference>
<dbReference type="GO" id="GO:0003677">
    <property type="term" value="F:DNA binding"/>
    <property type="evidence" value="ECO:0007669"/>
    <property type="project" value="UniProtKB-KW"/>
</dbReference>
<dbReference type="GO" id="GO:0003723">
    <property type="term" value="F:RNA binding"/>
    <property type="evidence" value="ECO:0007669"/>
    <property type="project" value="UniProtKB-KW"/>
</dbReference>
<dbReference type="GO" id="GO:0004521">
    <property type="term" value="F:RNA endonuclease activity"/>
    <property type="evidence" value="ECO:0000314"/>
    <property type="project" value="UniProtKB"/>
</dbReference>
<dbReference type="GO" id="GO:0016891">
    <property type="term" value="F:RNA endonuclease activity, producing 5'-phosphomonoesters"/>
    <property type="evidence" value="ECO:0000314"/>
    <property type="project" value="EcoCyc"/>
</dbReference>
<dbReference type="GO" id="GO:0006402">
    <property type="term" value="P:mRNA catabolic process"/>
    <property type="evidence" value="ECO:0000318"/>
    <property type="project" value="GO_Central"/>
</dbReference>
<dbReference type="GO" id="GO:0030308">
    <property type="term" value="P:negative regulation of cell growth"/>
    <property type="evidence" value="ECO:0000315"/>
    <property type="project" value="EcoCyc"/>
</dbReference>
<dbReference type="GO" id="GO:0006355">
    <property type="term" value="P:regulation of DNA-templated transcription"/>
    <property type="evidence" value="ECO:0000303"/>
    <property type="project" value="ComplexPortal"/>
</dbReference>
<dbReference type="GO" id="GO:0040008">
    <property type="term" value="P:regulation of growth"/>
    <property type="evidence" value="ECO:0000303"/>
    <property type="project" value="ComplexPortal"/>
</dbReference>
<dbReference type="GO" id="GO:0043488">
    <property type="term" value="P:regulation of mRNA stability"/>
    <property type="evidence" value="ECO:0000314"/>
    <property type="project" value="UniProtKB"/>
</dbReference>
<dbReference type="GO" id="GO:0016075">
    <property type="term" value="P:rRNA catabolic process"/>
    <property type="evidence" value="ECO:0000318"/>
    <property type="project" value="GO_Central"/>
</dbReference>
<dbReference type="GO" id="GO:0044010">
    <property type="term" value="P:single-species biofilm formation"/>
    <property type="evidence" value="ECO:0000303"/>
    <property type="project" value="ComplexPortal"/>
</dbReference>
<dbReference type="Gene3D" id="2.30.30.110">
    <property type="match status" value="1"/>
</dbReference>
<dbReference type="InterPro" id="IPR003477">
    <property type="entry name" value="PemK-like"/>
</dbReference>
<dbReference type="InterPro" id="IPR011067">
    <property type="entry name" value="Plasmid_toxin/cell-grow_inhib"/>
</dbReference>
<dbReference type="NCBIfam" id="NF007320">
    <property type="entry name" value="PRK09812.1"/>
    <property type="match status" value="1"/>
</dbReference>
<dbReference type="PANTHER" id="PTHR33988">
    <property type="entry name" value="ENDORIBONUCLEASE MAZF-RELATED"/>
    <property type="match status" value="1"/>
</dbReference>
<dbReference type="PANTHER" id="PTHR33988:SF3">
    <property type="entry name" value="ENDORIBONUCLEASE TOXIN CHPB-RELATED"/>
    <property type="match status" value="1"/>
</dbReference>
<dbReference type="Pfam" id="PF02452">
    <property type="entry name" value="PemK_toxin"/>
    <property type="match status" value="1"/>
</dbReference>
<dbReference type="SUPFAM" id="SSF50118">
    <property type="entry name" value="Cell growth inhibitor/plasmid maintenance toxic component"/>
    <property type="match status" value="1"/>
</dbReference>
<feature type="chain" id="PRO_0000201899" description="Endoribonuclease toxin ChpB">
    <location>
        <begin position="1"/>
        <end position="116"/>
    </location>
</feature>
<gene>
    <name type="primary">chpB</name>
    <name type="synonym">chpBK</name>
    <name type="synonym">yjfE</name>
    <name type="ordered locus">b4225</name>
    <name type="ordered locus">JW4184</name>
</gene>
<keyword id="KW-0238">DNA-binding</keyword>
<keyword id="KW-0255">Endonuclease</keyword>
<keyword id="KW-0378">Hydrolase</keyword>
<keyword id="KW-0540">Nuclease</keyword>
<keyword id="KW-1185">Reference proteome</keyword>
<keyword id="KW-0694">RNA-binding</keyword>
<keyword id="KW-1277">Toxin-antitoxin system</keyword>
<comment type="function">
    <text evidence="1 2 3 5">Toxic component of a type II toxin-antitoxin (TA) system. ChpB is a sequence-specific mRNA and (weak) tmRNA endoribonuclease that inhibits protein synthesis and induces bacterial stasis. Cleavage is independent of the ribosome. Cleavage occurs at ACY sequences where Y is not C. The endoribonuclease activity is not as strong as that of MazF. The endoribonuclease activity (a toxin) is inhibited by its labile cognate antitoxin ChpS. Toxicity results when the levels of ChpS decrease in the cell, leading to mRNA degradation. Both ChpS and ChpB probably bind to the promoter region of the chpS-chpB operon to autoregulate their synthesis.</text>
</comment>
<comment type="activity regulation">
    <text evidence="3">Stimulated in vitro in a concentration-dependent fashion by extracellular death factor (EDF, a quorum sensing pentapeptide sequence NNWNN, probably produced from the zwf gene product glucose-6-phosphate 1-dehydrogenase), which is able to overcome inhibition by cognate antitoxin ChpS.</text>
</comment>
<comment type="subunit">
    <text evidence="2">Homodimer, interacts with ChpS, which inhibits the endoribonuclease activity.</text>
</comment>
<comment type="induction">
    <text evidence="5">Part of the chpS-chpB operon.</text>
</comment>
<comment type="disruption phenotype">
    <text evidence="1 4">No visible phenotype (PubMed:12972253, PubMed:8083180).</text>
</comment>
<comment type="similarity">
    <text evidence="6">Belongs to the PemK/MazF family.</text>
</comment>
<protein>
    <recommendedName>
        <fullName>Endoribonuclease toxin ChpB</fullName>
        <ecNumber>3.1.-.-</ecNumber>
    </recommendedName>
    <alternativeName>
        <fullName>Toxin ChpB</fullName>
    </alternativeName>
    <alternativeName>
        <fullName>mRNA interferase ChpB</fullName>
    </alternativeName>
</protein>